<protein>
    <recommendedName>
        <fullName evidence="1">Malonate decarboxylase acyl carrier protein</fullName>
    </recommendedName>
    <alternativeName>
        <fullName evidence="1">Malonate decarboxylase subunit delta</fullName>
    </alternativeName>
</protein>
<accession>B4SNX3</accession>
<feature type="chain" id="PRO_1000191176" description="Malonate decarboxylase acyl carrier protein">
    <location>
        <begin position="1"/>
        <end position="106"/>
    </location>
</feature>
<feature type="modified residue" description="O-(phosphoribosyl dephospho-coenzyme A)serine" evidence="1">
    <location>
        <position position="28"/>
    </location>
</feature>
<reference key="1">
    <citation type="submission" date="2008-06" db="EMBL/GenBank/DDBJ databases">
        <title>Complete sequence of Stenotrophomonas maltophilia R551-3.</title>
        <authorList>
            <consortium name="US DOE Joint Genome Institute"/>
            <person name="Lucas S."/>
            <person name="Copeland A."/>
            <person name="Lapidus A."/>
            <person name="Glavina del Rio T."/>
            <person name="Dalin E."/>
            <person name="Tice H."/>
            <person name="Pitluck S."/>
            <person name="Chain P."/>
            <person name="Malfatti S."/>
            <person name="Shin M."/>
            <person name="Vergez L."/>
            <person name="Lang D."/>
            <person name="Schmutz J."/>
            <person name="Larimer F."/>
            <person name="Land M."/>
            <person name="Hauser L."/>
            <person name="Kyrpides N."/>
            <person name="Mikhailova N."/>
            <person name="Taghavi S."/>
            <person name="Monchy S."/>
            <person name="Newman L."/>
            <person name="Vangronsveld J."/>
            <person name="van der Lelie D."/>
            <person name="Richardson P."/>
        </authorList>
    </citation>
    <scope>NUCLEOTIDE SEQUENCE [LARGE SCALE GENOMIC DNA]</scope>
    <source>
        <strain>R551-3</strain>
    </source>
</reference>
<gene>
    <name evidence="1" type="primary">mdcC</name>
    <name type="ordered locus">Smal_1080</name>
</gene>
<sequence>METLDYRFDGTTHAHFPTNAVLVGVLASGNLEILLEPAALDGAMTVRIITAAQGFGSVWQAVITDFARRHPLRDVRISINDAGATPAVVSLRLDQAVETLLGGGTP</sequence>
<name>MDCC_STRM5</name>
<evidence type="ECO:0000255" key="1">
    <source>
        <dbReference type="HAMAP-Rule" id="MF_00710"/>
    </source>
</evidence>
<comment type="function">
    <text evidence="1">Subunit of malonate decarboxylase, it is an acyl carrier protein to which acetyl and malonyl thioester residues are bound via a 2'-(5''-phosphoribosyl)-3'-dephospho-CoA prosthetic group and turn over during the catalytic mechanism.</text>
</comment>
<comment type="subcellular location">
    <subcellularLocation>
        <location evidence="1">Cytoplasm</location>
    </subcellularLocation>
</comment>
<comment type="PTM">
    <text evidence="1">Covalently binds the prosthetic group of malonate decarboxylase.</text>
</comment>
<comment type="similarity">
    <text evidence="1">Belongs to the MdcC family.</text>
</comment>
<dbReference type="EMBL" id="CP001111">
    <property type="protein sequence ID" value="ACF50785.1"/>
    <property type="molecule type" value="Genomic_DNA"/>
</dbReference>
<dbReference type="RefSeq" id="WP_004147942.1">
    <property type="nucleotide sequence ID" value="NC_011071.1"/>
</dbReference>
<dbReference type="SMR" id="B4SNX3"/>
<dbReference type="STRING" id="391008.Smal_1080"/>
<dbReference type="KEGG" id="smt:Smal_1080"/>
<dbReference type="eggNOG" id="COG3052">
    <property type="taxonomic scope" value="Bacteria"/>
</dbReference>
<dbReference type="HOGENOM" id="CLU_173135_0_0_6"/>
<dbReference type="OrthoDB" id="120290at2"/>
<dbReference type="Proteomes" id="UP000001867">
    <property type="component" value="Chromosome"/>
</dbReference>
<dbReference type="GO" id="GO:0005737">
    <property type="term" value="C:cytoplasm"/>
    <property type="evidence" value="ECO:0007669"/>
    <property type="project" value="UniProtKB-SubCell"/>
</dbReference>
<dbReference type="GO" id="GO:0000036">
    <property type="term" value="F:acyl carrier activity"/>
    <property type="evidence" value="ECO:0007669"/>
    <property type="project" value="UniProtKB-UniRule"/>
</dbReference>
<dbReference type="HAMAP" id="MF_00710">
    <property type="entry name" value="Malonate_deCO2ase_dsu"/>
    <property type="match status" value="1"/>
</dbReference>
<dbReference type="InterPro" id="IPR023439">
    <property type="entry name" value="Mal_deCO2ase/Cit_lyase_ACP"/>
</dbReference>
<dbReference type="InterPro" id="IPR009662">
    <property type="entry name" value="Malonate_deCO2ase_dsu"/>
</dbReference>
<dbReference type="NCBIfam" id="TIGR03130">
    <property type="entry name" value="malonate_delta"/>
    <property type="match status" value="1"/>
</dbReference>
<dbReference type="Pfam" id="PF06857">
    <property type="entry name" value="ACP"/>
    <property type="match status" value="1"/>
</dbReference>
<keyword id="KW-0963">Cytoplasm</keyword>
<keyword id="KW-0597">Phosphoprotein</keyword>
<proteinExistence type="inferred from homology"/>
<organism>
    <name type="scientific">Stenotrophomonas maltophilia (strain R551-3)</name>
    <dbReference type="NCBI Taxonomy" id="391008"/>
    <lineage>
        <taxon>Bacteria</taxon>
        <taxon>Pseudomonadati</taxon>
        <taxon>Pseudomonadota</taxon>
        <taxon>Gammaproteobacteria</taxon>
        <taxon>Lysobacterales</taxon>
        <taxon>Lysobacteraceae</taxon>
        <taxon>Stenotrophomonas</taxon>
        <taxon>Stenotrophomonas maltophilia group</taxon>
    </lineage>
</organism>